<dbReference type="EC" id="3.5.4.16" evidence="1"/>
<dbReference type="EMBL" id="CP000857">
    <property type="protein sequence ID" value="ACN45666.1"/>
    <property type="molecule type" value="Genomic_DNA"/>
</dbReference>
<dbReference type="RefSeq" id="WP_001139611.1">
    <property type="nucleotide sequence ID" value="NC_012125.1"/>
</dbReference>
<dbReference type="SMR" id="C0Q0U7"/>
<dbReference type="KEGG" id="sei:SPC_1509"/>
<dbReference type="HOGENOM" id="CLU_049768_3_2_6"/>
<dbReference type="UniPathway" id="UPA00848">
    <property type="reaction ID" value="UER00151"/>
</dbReference>
<dbReference type="Proteomes" id="UP000001599">
    <property type="component" value="Chromosome"/>
</dbReference>
<dbReference type="GO" id="GO:0005737">
    <property type="term" value="C:cytoplasm"/>
    <property type="evidence" value="ECO:0007669"/>
    <property type="project" value="TreeGrafter"/>
</dbReference>
<dbReference type="GO" id="GO:0005525">
    <property type="term" value="F:GTP binding"/>
    <property type="evidence" value="ECO:0007669"/>
    <property type="project" value="UniProtKB-KW"/>
</dbReference>
<dbReference type="GO" id="GO:0003934">
    <property type="term" value="F:GTP cyclohydrolase I activity"/>
    <property type="evidence" value="ECO:0007669"/>
    <property type="project" value="UniProtKB-UniRule"/>
</dbReference>
<dbReference type="GO" id="GO:0008270">
    <property type="term" value="F:zinc ion binding"/>
    <property type="evidence" value="ECO:0007669"/>
    <property type="project" value="UniProtKB-UniRule"/>
</dbReference>
<dbReference type="GO" id="GO:0006730">
    <property type="term" value="P:one-carbon metabolic process"/>
    <property type="evidence" value="ECO:0007669"/>
    <property type="project" value="UniProtKB-UniRule"/>
</dbReference>
<dbReference type="GO" id="GO:0006729">
    <property type="term" value="P:tetrahydrobiopterin biosynthetic process"/>
    <property type="evidence" value="ECO:0007669"/>
    <property type="project" value="TreeGrafter"/>
</dbReference>
<dbReference type="GO" id="GO:0046654">
    <property type="term" value="P:tetrahydrofolate biosynthetic process"/>
    <property type="evidence" value="ECO:0007669"/>
    <property type="project" value="UniProtKB-UniRule"/>
</dbReference>
<dbReference type="CDD" id="cd00642">
    <property type="entry name" value="GTP_cyclohydro1"/>
    <property type="match status" value="1"/>
</dbReference>
<dbReference type="FunFam" id="1.10.286.10:FF:000002">
    <property type="entry name" value="GTP cyclohydrolase 1"/>
    <property type="match status" value="1"/>
</dbReference>
<dbReference type="FunFam" id="3.30.1130.10:FF:000001">
    <property type="entry name" value="GTP cyclohydrolase 1"/>
    <property type="match status" value="1"/>
</dbReference>
<dbReference type="Gene3D" id="1.10.286.10">
    <property type="match status" value="1"/>
</dbReference>
<dbReference type="Gene3D" id="3.30.1130.10">
    <property type="match status" value="1"/>
</dbReference>
<dbReference type="HAMAP" id="MF_00223">
    <property type="entry name" value="FolE"/>
    <property type="match status" value="1"/>
</dbReference>
<dbReference type="InterPro" id="IPR043133">
    <property type="entry name" value="GTP-CH-I_C/QueF"/>
</dbReference>
<dbReference type="InterPro" id="IPR043134">
    <property type="entry name" value="GTP-CH-I_N"/>
</dbReference>
<dbReference type="InterPro" id="IPR001474">
    <property type="entry name" value="GTP_CycHdrlase_I"/>
</dbReference>
<dbReference type="InterPro" id="IPR018234">
    <property type="entry name" value="GTP_CycHdrlase_I_CS"/>
</dbReference>
<dbReference type="InterPro" id="IPR020602">
    <property type="entry name" value="GTP_CycHdrlase_I_dom"/>
</dbReference>
<dbReference type="NCBIfam" id="TIGR00063">
    <property type="entry name" value="folE"/>
    <property type="match status" value="1"/>
</dbReference>
<dbReference type="NCBIfam" id="NF006824">
    <property type="entry name" value="PRK09347.1-1"/>
    <property type="match status" value="1"/>
</dbReference>
<dbReference type="NCBIfam" id="NF006825">
    <property type="entry name" value="PRK09347.1-2"/>
    <property type="match status" value="1"/>
</dbReference>
<dbReference type="NCBIfam" id="NF006826">
    <property type="entry name" value="PRK09347.1-3"/>
    <property type="match status" value="1"/>
</dbReference>
<dbReference type="PANTHER" id="PTHR11109:SF7">
    <property type="entry name" value="GTP CYCLOHYDROLASE 1"/>
    <property type="match status" value="1"/>
</dbReference>
<dbReference type="PANTHER" id="PTHR11109">
    <property type="entry name" value="GTP CYCLOHYDROLASE I"/>
    <property type="match status" value="1"/>
</dbReference>
<dbReference type="Pfam" id="PF01227">
    <property type="entry name" value="GTP_cyclohydroI"/>
    <property type="match status" value="1"/>
</dbReference>
<dbReference type="SUPFAM" id="SSF55620">
    <property type="entry name" value="Tetrahydrobiopterin biosynthesis enzymes-like"/>
    <property type="match status" value="1"/>
</dbReference>
<dbReference type="PROSITE" id="PS00859">
    <property type="entry name" value="GTP_CYCLOHYDROL_1_1"/>
    <property type="match status" value="1"/>
</dbReference>
<dbReference type="PROSITE" id="PS00860">
    <property type="entry name" value="GTP_CYCLOHYDROL_1_2"/>
    <property type="match status" value="1"/>
</dbReference>
<gene>
    <name evidence="1" type="primary">folE</name>
    <name type="ordered locus">SPC_1509</name>
</gene>
<evidence type="ECO:0000255" key="1">
    <source>
        <dbReference type="HAMAP-Rule" id="MF_00223"/>
    </source>
</evidence>
<reference key="1">
    <citation type="journal article" date="2009" name="PLoS ONE">
        <title>Salmonella paratyphi C: genetic divergence from Salmonella choleraesuis and pathogenic convergence with Salmonella typhi.</title>
        <authorList>
            <person name="Liu W.-Q."/>
            <person name="Feng Y."/>
            <person name="Wang Y."/>
            <person name="Zou Q.-H."/>
            <person name="Chen F."/>
            <person name="Guo J.-T."/>
            <person name="Peng Y.-H."/>
            <person name="Jin Y."/>
            <person name="Li Y.-G."/>
            <person name="Hu S.-N."/>
            <person name="Johnston R.N."/>
            <person name="Liu G.-R."/>
            <person name="Liu S.-L."/>
        </authorList>
    </citation>
    <scope>NUCLEOTIDE SEQUENCE [LARGE SCALE GENOMIC DNA]</scope>
    <source>
        <strain>RKS4594</strain>
    </source>
</reference>
<comment type="catalytic activity">
    <reaction evidence="1">
        <text>GTP + H2O = 7,8-dihydroneopterin 3'-triphosphate + formate + H(+)</text>
        <dbReference type="Rhea" id="RHEA:17473"/>
        <dbReference type="ChEBI" id="CHEBI:15377"/>
        <dbReference type="ChEBI" id="CHEBI:15378"/>
        <dbReference type="ChEBI" id="CHEBI:15740"/>
        <dbReference type="ChEBI" id="CHEBI:37565"/>
        <dbReference type="ChEBI" id="CHEBI:58462"/>
        <dbReference type="EC" id="3.5.4.16"/>
    </reaction>
</comment>
<comment type="pathway">
    <text evidence="1">Cofactor biosynthesis; 7,8-dihydroneopterin triphosphate biosynthesis; 7,8-dihydroneopterin triphosphate from GTP: step 1/1.</text>
</comment>
<comment type="subunit">
    <text evidence="1">Homomer.</text>
</comment>
<comment type="similarity">
    <text evidence="1">Belongs to the GTP cyclohydrolase I family.</text>
</comment>
<protein>
    <recommendedName>
        <fullName evidence="1">GTP cyclohydrolase 1</fullName>
        <ecNumber evidence="1">3.5.4.16</ecNumber>
    </recommendedName>
    <alternativeName>
        <fullName evidence="1">GTP cyclohydrolase I</fullName>
        <shortName evidence="1">GTP-CH-I</shortName>
    </alternativeName>
</protein>
<keyword id="KW-0342">GTP-binding</keyword>
<keyword id="KW-0378">Hydrolase</keyword>
<keyword id="KW-0479">Metal-binding</keyword>
<keyword id="KW-0547">Nucleotide-binding</keyword>
<keyword id="KW-0554">One-carbon metabolism</keyword>
<keyword id="KW-0862">Zinc</keyword>
<feature type="chain" id="PRO_1000124926" description="GTP cyclohydrolase 1">
    <location>
        <begin position="1"/>
        <end position="222"/>
    </location>
</feature>
<feature type="binding site" evidence="1">
    <location>
        <position position="111"/>
    </location>
    <ligand>
        <name>Zn(2+)</name>
        <dbReference type="ChEBI" id="CHEBI:29105"/>
    </ligand>
</feature>
<feature type="binding site" evidence="1">
    <location>
        <position position="114"/>
    </location>
    <ligand>
        <name>Zn(2+)</name>
        <dbReference type="ChEBI" id="CHEBI:29105"/>
    </ligand>
</feature>
<feature type="binding site" evidence="1">
    <location>
        <position position="182"/>
    </location>
    <ligand>
        <name>Zn(2+)</name>
        <dbReference type="ChEBI" id="CHEBI:29105"/>
    </ligand>
</feature>
<name>GCH1_SALPC</name>
<accession>C0Q0U7</accession>
<sequence length="222" mass="24771">MPSLSKEAALVHDALVARGLETPLRPPMDELDNETRKSLIAGHMTEIMQLLNLDLSDDSLMETPHRIAKMYVDEIFAGLDYANFPKITLIENKMKVDEMVTVRDITLTSTCEHHFVTIDGKATVAYIPKDSVIGLSKINRIVQFFAQRPQVQERLTQQILTALQTLLGTNNVAVSIDAVHYCVKARGIRDATSATTTTSLGGLFKSSQNTRQEFLRAVRHHP</sequence>
<organism>
    <name type="scientific">Salmonella paratyphi C (strain RKS4594)</name>
    <dbReference type="NCBI Taxonomy" id="476213"/>
    <lineage>
        <taxon>Bacteria</taxon>
        <taxon>Pseudomonadati</taxon>
        <taxon>Pseudomonadota</taxon>
        <taxon>Gammaproteobacteria</taxon>
        <taxon>Enterobacterales</taxon>
        <taxon>Enterobacteriaceae</taxon>
        <taxon>Salmonella</taxon>
    </lineage>
</organism>
<proteinExistence type="inferred from homology"/>